<protein>
    <recommendedName>
        <fullName>Flap endonuclease Xni</fullName>
        <shortName>FEN</shortName>
        <ecNumber>3.1.-.-</ecNumber>
    </recommendedName>
    <alternativeName>
        <fullName>Exonuclease IX</fullName>
        <shortName>ExoIX</shortName>
    </alternativeName>
</protein>
<dbReference type="EC" id="3.1.-.-"/>
<dbReference type="EMBL" id="L07763">
    <property type="status" value="NOT_ANNOTATED_CDS"/>
    <property type="molecule type" value="Genomic_DNA"/>
</dbReference>
<dbReference type="EMBL" id="U29581">
    <property type="protein sequence ID" value="AAB40448.1"/>
    <property type="status" value="ALT_INIT"/>
    <property type="molecule type" value="Genomic_DNA"/>
</dbReference>
<dbReference type="EMBL" id="U00096">
    <property type="protein sequence ID" value="AAC75840.2"/>
    <property type="molecule type" value="Genomic_DNA"/>
</dbReference>
<dbReference type="EMBL" id="AP009048">
    <property type="protein sequence ID" value="BAE76870.1"/>
    <property type="status" value="ALT_INIT"/>
    <property type="molecule type" value="Genomic_DNA"/>
</dbReference>
<dbReference type="EMBL" id="M27177">
    <property type="status" value="NOT_ANNOTATED_CDS"/>
    <property type="molecule type" value="Genomic_DNA"/>
</dbReference>
<dbReference type="PIR" id="B65062">
    <property type="entry name" value="B65062"/>
</dbReference>
<dbReference type="RefSeq" id="NP_417278.4">
    <property type="nucleotide sequence ID" value="NC_000913.3"/>
</dbReference>
<dbReference type="RefSeq" id="WP_000268232.1">
    <property type="nucleotide sequence ID" value="NZ_SSUV01000026.1"/>
</dbReference>
<dbReference type="PDB" id="3ZD8">
    <property type="method" value="X-ray"/>
    <property type="resolution" value="2.00 A"/>
    <property type="chains" value="A/B=1-251"/>
</dbReference>
<dbReference type="PDB" id="3ZD9">
    <property type="method" value="X-ray"/>
    <property type="resolution" value="2.00 A"/>
    <property type="chains" value="A=1-251"/>
</dbReference>
<dbReference type="PDB" id="3ZDA">
    <property type="method" value="X-ray"/>
    <property type="resolution" value="1.50 A"/>
    <property type="chains" value="A=1-251"/>
</dbReference>
<dbReference type="PDB" id="3ZDB">
    <property type="method" value="X-ray"/>
    <property type="resolution" value="1.47 A"/>
    <property type="chains" value="A=1-251"/>
</dbReference>
<dbReference type="PDB" id="3ZDC">
    <property type="method" value="X-ray"/>
    <property type="resolution" value="1.53 A"/>
    <property type="chains" value="A=1-251"/>
</dbReference>
<dbReference type="PDB" id="3ZDD">
    <property type="method" value="X-ray"/>
    <property type="resolution" value="1.50 A"/>
    <property type="chains" value="A=1-251"/>
</dbReference>
<dbReference type="PDB" id="3ZDE">
    <property type="method" value="X-ray"/>
    <property type="resolution" value="2.45 A"/>
    <property type="chains" value="A=1-251"/>
</dbReference>
<dbReference type="PDBsum" id="3ZD8"/>
<dbReference type="PDBsum" id="3ZD9"/>
<dbReference type="PDBsum" id="3ZDA"/>
<dbReference type="PDBsum" id="3ZDB"/>
<dbReference type="PDBsum" id="3ZDC"/>
<dbReference type="PDBsum" id="3ZDD"/>
<dbReference type="PDBsum" id="3ZDE"/>
<dbReference type="SMR" id="P38506"/>
<dbReference type="BioGRID" id="4259222">
    <property type="interactions" value="105"/>
</dbReference>
<dbReference type="BioGRID" id="851586">
    <property type="interactions" value="1"/>
</dbReference>
<dbReference type="DIP" id="DIP-11145N"/>
<dbReference type="FunCoup" id="P38506">
    <property type="interactions" value="244"/>
</dbReference>
<dbReference type="IntAct" id="P38506">
    <property type="interactions" value="3"/>
</dbReference>
<dbReference type="STRING" id="511145.b2798"/>
<dbReference type="jPOST" id="P38506"/>
<dbReference type="PaxDb" id="511145-b2798"/>
<dbReference type="EnsemblBacteria" id="AAC75840">
    <property type="protein sequence ID" value="AAC75840"/>
    <property type="gene ID" value="b2798"/>
</dbReference>
<dbReference type="GeneID" id="93779200"/>
<dbReference type="GeneID" id="947256"/>
<dbReference type="KEGG" id="ecj:JW5446"/>
<dbReference type="KEGG" id="eco:b2798"/>
<dbReference type="KEGG" id="ecoc:C3026_15385"/>
<dbReference type="PATRIC" id="fig|1411691.4.peg.3935"/>
<dbReference type="EchoBASE" id="EB2275"/>
<dbReference type="eggNOG" id="COG0258">
    <property type="taxonomic scope" value="Bacteria"/>
</dbReference>
<dbReference type="HOGENOM" id="CLU_004675_1_2_6"/>
<dbReference type="InParanoid" id="P38506"/>
<dbReference type="OMA" id="WRVDLIP"/>
<dbReference type="OrthoDB" id="8070997at2"/>
<dbReference type="PhylomeDB" id="P38506"/>
<dbReference type="BioCyc" id="EcoCyc:EG12372-MONOMER"/>
<dbReference type="PRO" id="PR:P38506"/>
<dbReference type="Proteomes" id="UP000000625">
    <property type="component" value="Chromosome"/>
</dbReference>
<dbReference type="GO" id="GO:0008409">
    <property type="term" value="F:5'-3' exonuclease activity"/>
    <property type="evidence" value="ECO:0007669"/>
    <property type="project" value="InterPro"/>
</dbReference>
<dbReference type="GO" id="GO:0017108">
    <property type="term" value="F:5'-flap endonuclease activity"/>
    <property type="evidence" value="ECO:0000314"/>
    <property type="project" value="UniProtKB"/>
</dbReference>
<dbReference type="GO" id="GO:0003677">
    <property type="term" value="F:DNA binding"/>
    <property type="evidence" value="ECO:0000314"/>
    <property type="project" value="UniProtKB"/>
</dbReference>
<dbReference type="GO" id="GO:0000287">
    <property type="term" value="F:magnesium ion binding"/>
    <property type="evidence" value="ECO:0000314"/>
    <property type="project" value="UniProtKB"/>
</dbReference>
<dbReference type="GO" id="GO:0030955">
    <property type="term" value="F:potassium ion binding"/>
    <property type="evidence" value="ECO:0000314"/>
    <property type="project" value="UniProtKB"/>
</dbReference>
<dbReference type="GO" id="GO:0033567">
    <property type="term" value="P:DNA replication, Okazaki fragment processing"/>
    <property type="evidence" value="ECO:0000314"/>
    <property type="project" value="UniProtKB"/>
</dbReference>
<dbReference type="CDD" id="cd09898">
    <property type="entry name" value="H3TH_53EXO"/>
    <property type="match status" value="1"/>
</dbReference>
<dbReference type="CDD" id="cd09859">
    <property type="entry name" value="PIN_53EXO"/>
    <property type="match status" value="1"/>
</dbReference>
<dbReference type="FunFam" id="1.10.150.20:FF:000003">
    <property type="entry name" value="DNA polymerase I"/>
    <property type="match status" value="1"/>
</dbReference>
<dbReference type="FunFam" id="3.40.50.1010:FF:000011">
    <property type="entry name" value="Flap endonuclease Xni"/>
    <property type="match status" value="1"/>
</dbReference>
<dbReference type="Gene3D" id="1.10.150.20">
    <property type="entry name" value="5' to 3' exonuclease, C-terminal subdomain"/>
    <property type="match status" value="1"/>
</dbReference>
<dbReference type="Gene3D" id="3.40.50.1010">
    <property type="entry name" value="5'-nuclease"/>
    <property type="match status" value="1"/>
</dbReference>
<dbReference type="HAMAP" id="MF_01192">
    <property type="entry name" value="Xni"/>
    <property type="match status" value="1"/>
</dbReference>
<dbReference type="InterPro" id="IPR020046">
    <property type="entry name" value="5-3_exonucl_a-hlix_arch_N"/>
</dbReference>
<dbReference type="InterPro" id="IPR002421">
    <property type="entry name" value="5-3_exonuclease"/>
</dbReference>
<dbReference type="InterPro" id="IPR036279">
    <property type="entry name" value="5-3_exonuclease_C_sf"/>
</dbReference>
<dbReference type="InterPro" id="IPR020045">
    <property type="entry name" value="DNA_polI_H3TH"/>
</dbReference>
<dbReference type="InterPro" id="IPR038969">
    <property type="entry name" value="FEN"/>
</dbReference>
<dbReference type="InterPro" id="IPR008918">
    <property type="entry name" value="HhH2"/>
</dbReference>
<dbReference type="InterPro" id="IPR029060">
    <property type="entry name" value="PIN-like_dom_sf"/>
</dbReference>
<dbReference type="InterPro" id="IPR022895">
    <property type="entry name" value="Xni"/>
</dbReference>
<dbReference type="NCBIfam" id="NF007017">
    <property type="entry name" value="PRK09482.1"/>
    <property type="match status" value="1"/>
</dbReference>
<dbReference type="PANTHER" id="PTHR42646:SF2">
    <property type="entry name" value="5'-3' EXONUCLEASE FAMILY PROTEIN"/>
    <property type="match status" value="1"/>
</dbReference>
<dbReference type="PANTHER" id="PTHR42646">
    <property type="entry name" value="FLAP ENDONUCLEASE XNI"/>
    <property type="match status" value="1"/>
</dbReference>
<dbReference type="Pfam" id="PF01367">
    <property type="entry name" value="5_3_exonuc"/>
    <property type="match status" value="1"/>
</dbReference>
<dbReference type="Pfam" id="PF02739">
    <property type="entry name" value="5_3_exonuc_N"/>
    <property type="match status" value="1"/>
</dbReference>
<dbReference type="SMART" id="SM00475">
    <property type="entry name" value="53EXOc"/>
    <property type="match status" value="1"/>
</dbReference>
<dbReference type="SMART" id="SM00279">
    <property type="entry name" value="HhH2"/>
    <property type="match status" value="1"/>
</dbReference>
<dbReference type="SUPFAM" id="SSF47807">
    <property type="entry name" value="5' to 3' exonuclease, C-terminal subdomain"/>
    <property type="match status" value="1"/>
</dbReference>
<dbReference type="SUPFAM" id="SSF88723">
    <property type="entry name" value="PIN domain-like"/>
    <property type="match status" value="1"/>
</dbReference>
<gene>
    <name type="primary">ygdG</name>
    <name type="synonym">exo</name>
    <name type="synonym">xni</name>
    <name type="ordered locus">b2798</name>
    <name type="ordered locus">JW5446</name>
</gene>
<name>XNI_ECOLI</name>
<comment type="function">
    <text evidence="2 4 5">Has flap endonuclease activity (PubMed:23821668), but does not seem to have exonuclease activity (PubMed:17567612, PubMed:19000038). During DNA replication, flap endonucleases cleave the 5'-overhanging flap structure that is generated by displacement synthesis when DNA polymerase encounters the 5'-end of a downstream Okazaki fragment.</text>
</comment>
<comment type="cofactor">
    <cofactor evidence="5">
        <name>Mg(2+)</name>
        <dbReference type="ChEBI" id="CHEBI:18420"/>
    </cofactor>
    <text evidence="5">Binds 2 Mg(2+) per subunit. Only one magnesium ion has a direct interaction with the protein, the other interactions are indirect.</text>
</comment>
<comment type="cofactor">
    <cofactor evidence="5">
        <name>K(+)</name>
        <dbReference type="ChEBI" id="CHEBI:29103"/>
    </cofactor>
    <text evidence="5">Binds 1 K(+) per subunit. The potassium ion strongly increases the affinity for DNA.</text>
</comment>
<comment type="subunit">
    <text evidence="2">Interacts with the DNA-binding proteins SSB and H-NS.</text>
</comment>
<comment type="disruption phenotype">
    <text evidence="3">Can be deleted, however double-disruptions of polA and xni are not viable, suggesting they have a redundant essential function.</text>
</comment>
<comment type="similarity">
    <text evidence="6">Belongs to the Xni family.</text>
</comment>
<comment type="caution">
    <text evidence="7">Was initially reported (PubMed:9592142) as a 3'-5' exonuclease due to contamination of samples. This protein possesses no such activity (PubMed:17567612, PubMed:19000038).</text>
</comment>
<comment type="sequence caution" evidence="6">
    <conflict type="erroneous initiation">
        <sequence resource="EMBL-CDS" id="AAB40448"/>
    </conflict>
    <text>Extended N-terminus.</text>
</comment>
<comment type="sequence caution" evidence="6">
    <conflict type="erroneous initiation">
        <sequence resource="EMBL-CDS" id="BAE76870"/>
    </conflict>
    <text>Extended N-terminus.</text>
</comment>
<reference key="1">
    <citation type="journal article" date="1993" name="Eur. J. Biochem.">
        <title>Sequencing and characterization of the sdaB gene from Escherichia coli K-12.</title>
        <authorList>
            <person name="Shao Z."/>
            <person name="Newman E.B."/>
        </authorList>
    </citation>
    <scope>NUCLEOTIDE SEQUENCE [GENOMIC DNA]</scope>
    <source>
        <strain>K12</strain>
    </source>
</reference>
<reference key="2">
    <citation type="journal article" date="1997" name="Science">
        <title>The complete genome sequence of Escherichia coli K-12.</title>
        <authorList>
            <person name="Blattner F.R."/>
            <person name="Plunkett G. III"/>
            <person name="Bloch C.A."/>
            <person name="Perna N.T."/>
            <person name="Burland V."/>
            <person name="Riley M."/>
            <person name="Collado-Vides J."/>
            <person name="Glasner J.D."/>
            <person name="Rode C.K."/>
            <person name="Mayhew G.F."/>
            <person name="Gregor J."/>
            <person name="Davis N.W."/>
            <person name="Kirkpatrick H.A."/>
            <person name="Goeden M.A."/>
            <person name="Rose D.J."/>
            <person name="Mau B."/>
            <person name="Shao Y."/>
        </authorList>
    </citation>
    <scope>NUCLEOTIDE SEQUENCE [LARGE SCALE GENOMIC DNA]</scope>
    <source>
        <strain>K12 / MG1655 / ATCC 47076</strain>
    </source>
</reference>
<reference key="3">
    <citation type="journal article" date="2006" name="Mol. Syst. Biol.">
        <title>Highly accurate genome sequences of Escherichia coli K-12 strains MG1655 and W3110.</title>
        <authorList>
            <person name="Hayashi K."/>
            <person name="Morooka N."/>
            <person name="Yamamoto Y."/>
            <person name="Fujita K."/>
            <person name="Isono K."/>
            <person name="Choi S."/>
            <person name="Ohtsubo E."/>
            <person name="Baba T."/>
            <person name="Wanner B.L."/>
            <person name="Mori H."/>
            <person name="Horiuchi T."/>
        </authorList>
    </citation>
    <scope>NUCLEOTIDE SEQUENCE [LARGE SCALE GENOMIC DNA]</scope>
    <source>
        <strain>K12 / W3110 / ATCC 27325 / DSM 5911</strain>
    </source>
</reference>
<reference key="4">
    <citation type="journal article" date="1989" name="Nucleic Acids Res.">
        <title>The nucleotide sequence of Escherichia coli genes for L-fucose dissimilation.</title>
        <authorList>
            <person name="Lu Z."/>
            <person name="Lin E.C.C."/>
        </authorList>
    </citation>
    <scope>NUCLEOTIDE SEQUENCE [GENOMIC DNA] OF 193-251</scope>
    <source>
        <strain>K12</strain>
    </source>
</reference>
<reference key="5">
    <citation type="journal article" date="1994" name="J. Theor. Biol.">
        <title>Computer aided identification of a potential 5'-3' exonuclease gene encoded by Escherichia coli.</title>
        <authorList>
            <person name="Sayers J.R."/>
        </authorList>
    </citation>
    <scope>IDENTIFICATION</scope>
</reference>
<reference key="6">
    <citation type="journal article" date="1994" name="Nucleic Acids Res.">
        <title>Intrinsic and extrinsic approaches for detecting genes in a bacterial genome.</title>
        <authorList>
            <person name="Borodovsky M."/>
            <person name="Rudd K.E."/>
            <person name="Koonin E.V."/>
        </authorList>
    </citation>
    <scope>IDENTIFICATION</scope>
</reference>
<reference key="7">
    <citation type="journal article" date="1994" name="Eur. J. Biochem.">
        <title>Sequencing and characterization of the sdaC gene and identification of the sdaCB operon in Escherichia coli K12.</title>
        <authorList>
            <person name="Shao Z."/>
            <person name="Lin R.T."/>
            <person name="Newman E.B."/>
        </authorList>
    </citation>
    <scope>IDENTIFICATION</scope>
</reference>
<reference key="8">
    <citation type="journal article" date="1998" name="Nucleic Acids Res.">
        <title>Exonuclease IX of Escherichia coli.</title>
        <authorList>
            <person name="Shafritz K.M."/>
            <person name="Sandigursky M."/>
            <person name="Franklin W.A."/>
        </authorList>
    </citation>
    <scope>PRELIMINARY CHARACTERIZATION</scope>
</reference>
<reference key="9">
    <citation type="journal article" date="2003" name="DNA Repair">
        <title>xni-deficient Escherichia coli are proficient for recombination and multiple pathways of repair.</title>
        <authorList>
            <person name="Lombardo M.-J."/>
            <person name="Aponyi I."/>
            <person name="Ray M.P."/>
            <person name="Sandigursky M."/>
            <person name="Franklin W.A."/>
            <person name="Rosenberg S.M."/>
        </authorList>
    </citation>
    <scope>LACK OF FUNCTION IN RECOMBINATION AND REPAIR PATHWAYS</scope>
</reference>
<reference key="10">
    <citation type="journal article" date="2007" name="J. Bacteriol.">
        <title>Reassessment of the in vivo functions of DNA polymerase I and RNase H in bacterial cell growth.</title>
        <authorList>
            <person name="Fukushima S."/>
            <person name="Itaya M."/>
            <person name="Kato H."/>
            <person name="Ogasawara N."/>
            <person name="Yoshikawa H."/>
        </authorList>
    </citation>
    <scope>DISRUPTION PHENOTYPE</scope>
    <source>
        <strain>K12 / AB1157</strain>
    </source>
</reference>
<reference key="11">
    <citation type="journal article" date="2007" name="Nucleic Acids Res.">
        <title>Molecular interactions of Escherichia coli ExoIX and identification of its associated 3'-5' exonuclease activity.</title>
        <authorList>
            <person name="Hodskinson M.R.G."/>
            <person name="Allen L.M."/>
            <person name="Thomson D.P."/>
            <person name="Sayers J.R."/>
        </authorList>
    </citation>
    <scope>INTERACTION WITH SSB AND H-NS</scope>
    <scope>FUNCTION</scope>
    <scope>LACK OF 3'-5' EXONUCLEASE ACTIVITY</scope>
    <source>
        <strain>K12 / XL1-Blue</strain>
    </source>
</reference>
<reference key="12">
    <citation type="journal article" date="2009" name="Biochem. J.">
        <title>Active site substitutions delineate distinct classes of eubacterial flap endonuclease.</title>
        <authorList>
            <person name="Allen L.M."/>
            <person name="Hodskinson M.R.G."/>
            <person name="Sayers J.R."/>
        </authorList>
    </citation>
    <scope>LACK OF 5'-3' EXONUCLEASE ACTIVITY</scope>
    <scope>FUNCTION</scope>
    <scope>DISCUSSION OF SEQUENCE</scope>
    <source>
        <strain>K12 / XL1-Blue</strain>
    </source>
</reference>
<reference key="13">
    <citation type="journal article" date="2013" name="Nucleic Acids Res.">
        <title>The structure of Escherichia coli ExoIX--implications for DNA binding and catalysis in flap endonucleases.</title>
        <authorList>
            <person name="Anstey-Gilbert C.S."/>
            <person name="Hemsworth G.R."/>
            <person name="Flemming C.S."/>
            <person name="Hodskinson M.R."/>
            <person name="Zhang J."/>
            <person name="Sedelnikova S.E."/>
            <person name="Stillman T.J."/>
            <person name="Sayers J.R."/>
            <person name="Artymiuk P.J."/>
        </authorList>
    </citation>
    <scope>X-RAY CRYSTALLOGRAPHY (1.47 ANGSTROMS)</scope>
    <scope>FUNCTION</scope>
    <scope>CATALYTIC ACTIVITY</scope>
    <scope>DNA-BINDING</scope>
    <scope>COFACTOR</scope>
    <scope>MUTAGENESIS OF LYS-67</scope>
    <source>
        <strain>K12 / XL1-Blue</strain>
    </source>
</reference>
<sequence>MAVHLLIVDALNLIRRIHAVQGSPCVETCQHALDQLIMHSQPTHAVAVFDDENRSSGWRHQRLPDYKAGRPPMPEELHDEMPALRAAFEQRGVPCWSTSGNEADDLAATLAVKVTQAGHQATIVSTDKGYCQLLSPTLRIRDYFQKRWLDAPFIDKEFGVQPQQLPDYWGLAGISSSKVPGVAGIGPKSATQLLVEFQSLEGIYENLDAVAEKWRKKLETHKEMAFLCRDIARLQTDLHIDGNLQQLRLVR</sequence>
<proteinExistence type="evidence at protein level"/>
<organism>
    <name type="scientific">Escherichia coli (strain K12)</name>
    <dbReference type="NCBI Taxonomy" id="83333"/>
    <lineage>
        <taxon>Bacteria</taxon>
        <taxon>Pseudomonadati</taxon>
        <taxon>Pseudomonadota</taxon>
        <taxon>Gammaproteobacteria</taxon>
        <taxon>Enterobacterales</taxon>
        <taxon>Enterobacteriaceae</taxon>
        <taxon>Escherichia</taxon>
    </lineage>
</organism>
<feature type="chain" id="PRO_0000101292" description="Flap endonuclease Xni">
    <location>
        <begin position="1"/>
        <end position="251"/>
    </location>
</feature>
<feature type="domain" description="5'-3' exonuclease" evidence="1">
    <location>
        <begin position="160"/>
        <end position="249"/>
    </location>
</feature>
<feature type="region of interest" description="Interaction with DNA">
    <location>
        <begin position="184"/>
        <end position="189"/>
    </location>
</feature>
<feature type="coiled-coil region" evidence="1">
    <location>
        <begin position="198"/>
        <end position="225"/>
    </location>
</feature>
<feature type="binding site">
    <location>
        <position position="104"/>
    </location>
    <ligand>
        <name>Mg(2+)</name>
        <dbReference type="ChEBI" id="CHEBI:18420"/>
    </ligand>
</feature>
<feature type="binding site">
    <location>
        <position position="171"/>
    </location>
    <ligand>
        <name>K(+)</name>
        <dbReference type="ChEBI" id="CHEBI:29103"/>
    </ligand>
</feature>
<feature type="binding site">
    <location>
        <position position="172"/>
    </location>
    <ligand>
        <name>K(+)</name>
        <dbReference type="ChEBI" id="CHEBI:29103"/>
    </ligand>
</feature>
<feature type="binding site">
    <location>
        <position position="180"/>
    </location>
    <ligand>
        <name>K(+)</name>
        <dbReference type="ChEBI" id="CHEBI:29103"/>
    </ligand>
</feature>
<feature type="binding site">
    <location>
        <position position="182"/>
    </location>
    <ligand>
        <name>K(+)</name>
        <dbReference type="ChEBI" id="CHEBI:29103"/>
    </ligand>
</feature>
<feature type="binding site">
    <location>
        <position position="185"/>
    </location>
    <ligand>
        <name>K(+)</name>
        <dbReference type="ChEBI" id="CHEBI:29103"/>
    </ligand>
</feature>
<feature type="mutagenesis site" description="Strongly reduces flap endonuclease activity." evidence="5">
    <original>K</original>
    <variation>A</variation>
    <location>
        <position position="67"/>
    </location>
</feature>
<evidence type="ECO:0000255" key="1"/>
<evidence type="ECO:0000269" key="2">
    <source>
    </source>
</evidence>
<evidence type="ECO:0000269" key="3">
    <source>
    </source>
</evidence>
<evidence type="ECO:0000269" key="4">
    <source>
    </source>
</evidence>
<evidence type="ECO:0000269" key="5">
    <source>
    </source>
</evidence>
<evidence type="ECO:0000305" key="6"/>
<evidence type="ECO:0000305" key="7">
    <source>
    </source>
</evidence>
<keyword id="KW-0002">3D-structure</keyword>
<keyword id="KW-0175">Coiled coil</keyword>
<keyword id="KW-0238">DNA-binding</keyword>
<keyword id="KW-0255">Endonuclease</keyword>
<keyword id="KW-0378">Hydrolase</keyword>
<keyword id="KW-0460">Magnesium</keyword>
<keyword id="KW-0479">Metal-binding</keyword>
<keyword id="KW-0540">Nuclease</keyword>
<keyword id="KW-0630">Potassium</keyword>
<keyword id="KW-1185">Reference proteome</keyword>
<accession>P38506</accession>
<accession>Q2MA36</accession>
<accession>Q46922</accession>